<comment type="function">
    <text evidence="2">Part of the ATP-binding cassette (ABC) transport system ZnuABC involved in zinc import (By similarity). Binds zinc with high affinity and specificity and delivers it to the membrane permease for translocation into the cytoplasm (By similarity).</text>
</comment>
<comment type="subcellular location">
    <subcellularLocation>
        <location evidence="1">Periplasm</location>
    </subcellularLocation>
</comment>
<comment type="similarity">
    <text evidence="4">Belongs to the bacterial solute-binding protein 9 family.</text>
</comment>
<comment type="caution">
    <text evidence="4">It is not clear whether znuA acts as a metal-binding protein as it lacks two of the histidine residues involved in zinc binding.</text>
</comment>
<name>ZNUA_BUCAP</name>
<keyword id="KW-1015">Disulfide bond</keyword>
<keyword id="KW-0406">Ion transport</keyword>
<keyword id="KW-0479">Metal-binding</keyword>
<keyword id="KW-0574">Periplasm</keyword>
<keyword id="KW-0732">Signal</keyword>
<keyword id="KW-0813">Transport</keyword>
<keyword id="KW-0862">Zinc</keyword>
<keyword id="KW-0864">Zinc transport</keyword>
<reference key="1">
    <citation type="journal article" date="2002" name="Science">
        <title>50 million years of genomic stasis in endosymbiotic bacteria.</title>
        <authorList>
            <person name="Tamas I."/>
            <person name="Klasson L."/>
            <person name="Canbaeck B."/>
            <person name="Naeslund A.K."/>
            <person name="Eriksson A.-S."/>
            <person name="Wernegreen J.J."/>
            <person name="Sandstroem J.P."/>
            <person name="Moran N.A."/>
            <person name="Andersson S.G.E."/>
        </authorList>
    </citation>
    <scope>NUCLEOTIDE SEQUENCE [LARGE SCALE GENOMIC DNA]</scope>
    <source>
        <strain>Sg</strain>
    </source>
</reference>
<feature type="signal peptide" evidence="3">
    <location>
        <begin position="1"/>
        <end position="31"/>
    </location>
</feature>
<feature type="chain" id="PRO_0000031874" description="High-affinity zinc uptake system protein ZnuA">
    <location>
        <begin position="32"/>
        <end position="317"/>
    </location>
</feature>
<feature type="disulfide bond" evidence="2">
    <location>
        <begin position="259"/>
        <end position="313"/>
    </location>
</feature>
<evidence type="ECO:0000250" key="1">
    <source>
        <dbReference type="UniProtKB" id="A1B9L0"/>
    </source>
</evidence>
<evidence type="ECO:0000250" key="2">
    <source>
        <dbReference type="UniProtKB" id="P39172"/>
    </source>
</evidence>
<evidence type="ECO:0000255" key="3"/>
<evidence type="ECO:0000305" key="4"/>
<dbReference type="EMBL" id="AE013218">
    <property type="protein sequence ID" value="AAM67863.1"/>
    <property type="molecule type" value="Genomic_DNA"/>
</dbReference>
<dbReference type="SMR" id="Q8K9M5"/>
<dbReference type="STRING" id="198804.BUsg_309"/>
<dbReference type="KEGG" id="bas:BUsg_309"/>
<dbReference type="eggNOG" id="COG4531">
    <property type="taxonomic scope" value="Bacteria"/>
</dbReference>
<dbReference type="HOGENOM" id="CLU_016838_1_2_6"/>
<dbReference type="Proteomes" id="UP000000416">
    <property type="component" value="Chromosome"/>
</dbReference>
<dbReference type="GO" id="GO:0042597">
    <property type="term" value="C:periplasmic space"/>
    <property type="evidence" value="ECO:0007669"/>
    <property type="project" value="UniProtKB-SubCell"/>
</dbReference>
<dbReference type="GO" id="GO:0046872">
    <property type="term" value="F:metal ion binding"/>
    <property type="evidence" value="ECO:0007669"/>
    <property type="project" value="UniProtKB-KW"/>
</dbReference>
<dbReference type="GO" id="GO:0006829">
    <property type="term" value="P:zinc ion transport"/>
    <property type="evidence" value="ECO:0007669"/>
    <property type="project" value="UniProtKB-KW"/>
</dbReference>
<dbReference type="CDD" id="cd01019">
    <property type="entry name" value="ZnuA"/>
    <property type="match status" value="1"/>
</dbReference>
<dbReference type="Gene3D" id="3.40.50.1980">
    <property type="entry name" value="Nitrogenase molybdenum iron protein domain"/>
    <property type="match status" value="2"/>
</dbReference>
<dbReference type="InterPro" id="IPR050492">
    <property type="entry name" value="Bact_metal-bind_prot9"/>
</dbReference>
<dbReference type="InterPro" id="IPR035520">
    <property type="entry name" value="ZnuA"/>
</dbReference>
<dbReference type="InterPro" id="IPR006127">
    <property type="entry name" value="ZnuA-like"/>
</dbReference>
<dbReference type="NCBIfam" id="NF007091">
    <property type="entry name" value="PRK09545.1"/>
    <property type="match status" value="1"/>
</dbReference>
<dbReference type="PANTHER" id="PTHR42953:SF3">
    <property type="entry name" value="HIGH-AFFINITY ZINC UPTAKE SYSTEM PROTEIN ZNUA"/>
    <property type="match status" value="1"/>
</dbReference>
<dbReference type="PANTHER" id="PTHR42953">
    <property type="entry name" value="HIGH-AFFINITY ZINC UPTAKE SYSTEM PROTEIN ZNUA-RELATED"/>
    <property type="match status" value="1"/>
</dbReference>
<dbReference type="Pfam" id="PF01297">
    <property type="entry name" value="ZnuA"/>
    <property type="match status" value="1"/>
</dbReference>
<dbReference type="SUPFAM" id="SSF53807">
    <property type="entry name" value="Helical backbone' metal receptor"/>
    <property type="match status" value="1"/>
</dbReference>
<sequence length="317" mass="36976">MNINIMLKNKKKKFFSILAILFILMPNNSYASILTVFKPLGFIAAAIAHNVTNVEVIPPNGTTVENYYLLPFDLIKIKHSDFIILIGDQIEPFFFKKAVKYFKKKTIVLTKIKNIKFLLKHKSNFKKGKKKQKNTLQNKKEINNISYDMYLWLSPQIALESAIVIHDMLLKSMPQKKITIDKNLKYFKLCLSKTNKDIKKNVLSIKEKKYFTFHNTYKYFEKFYGLHPSGQFKTYPGIKTGVQYLYKIKNELLKKQAICVFIEPQFHANIIDFIIQGTNIQKENLDLFGTAIPLVQDSYVNFLVKLSNQYISCLKKI</sequence>
<protein>
    <recommendedName>
        <fullName>High-affinity zinc uptake system protein ZnuA</fullName>
    </recommendedName>
</protein>
<proteinExistence type="inferred from homology"/>
<accession>Q8K9M5</accession>
<gene>
    <name type="primary">znuA</name>
    <name type="ordered locus">BUsg_309</name>
</gene>
<organism>
    <name type="scientific">Buchnera aphidicola subsp. Schizaphis graminum (strain Sg)</name>
    <dbReference type="NCBI Taxonomy" id="198804"/>
    <lineage>
        <taxon>Bacteria</taxon>
        <taxon>Pseudomonadati</taxon>
        <taxon>Pseudomonadota</taxon>
        <taxon>Gammaproteobacteria</taxon>
        <taxon>Enterobacterales</taxon>
        <taxon>Erwiniaceae</taxon>
        <taxon>Buchnera</taxon>
    </lineage>
</organism>